<reference key="1">
    <citation type="journal article" date="2005" name="Nucleic Acids Res.">
        <title>Genome dynamics and diversity of Shigella species, the etiologic agents of bacillary dysentery.</title>
        <authorList>
            <person name="Yang F."/>
            <person name="Yang J."/>
            <person name="Zhang X."/>
            <person name="Chen L."/>
            <person name="Jiang Y."/>
            <person name="Yan Y."/>
            <person name="Tang X."/>
            <person name="Wang J."/>
            <person name="Xiong Z."/>
            <person name="Dong J."/>
            <person name="Xue Y."/>
            <person name="Zhu Y."/>
            <person name="Xu X."/>
            <person name="Sun L."/>
            <person name="Chen S."/>
            <person name="Nie H."/>
            <person name="Peng J."/>
            <person name="Xu J."/>
            <person name="Wang Y."/>
            <person name="Yuan Z."/>
            <person name="Wen Y."/>
            <person name="Yao Z."/>
            <person name="Shen Y."/>
            <person name="Qiang B."/>
            <person name="Hou Y."/>
            <person name="Yu J."/>
            <person name="Jin Q."/>
        </authorList>
    </citation>
    <scope>NUCLEOTIDE SEQUENCE [LARGE SCALE GENOMIC DNA]</scope>
    <source>
        <strain>Sd197</strain>
    </source>
</reference>
<name>GPDA_SHIDS</name>
<gene>
    <name evidence="1" type="primary">gpsA</name>
    <name type="ordered locus">SDY_4041</name>
</gene>
<sequence>MNQRNASMTVIGAGSYGTALAITLARNGHEVVLWGHDPEHIATLERDRCNAAFLPDVPFPDTLHLESDLATALAASRNILVVVPSHVFGEVLRQIKPLMRPDARLVWATKGLEAETGRLLQDVAREALGDQIPLAVISGPTFAKELAAGLPTAISLASTDQTFADDLQQLLHCGKSFRVYSNPDFIGVQLGGAVKNVIAIGAGMSDGIGFGANARTALITRGLAEMSRLGAALGADPATFMGMAGLGDLVLTCTDNQSRNRRFGMMLGQGMDVQSAQEKIGQVVEGYRNTKEVRELAHRFGVEMPITEEIYQVLYCGKNAREAALTLLGRARKDERSSH</sequence>
<accession>Q329P6</accession>
<proteinExistence type="inferred from homology"/>
<keyword id="KW-0963">Cytoplasm</keyword>
<keyword id="KW-0444">Lipid biosynthesis</keyword>
<keyword id="KW-0443">Lipid metabolism</keyword>
<keyword id="KW-0520">NAD</keyword>
<keyword id="KW-0521">NADP</keyword>
<keyword id="KW-0547">Nucleotide-binding</keyword>
<keyword id="KW-0560">Oxidoreductase</keyword>
<keyword id="KW-0594">Phospholipid biosynthesis</keyword>
<keyword id="KW-1208">Phospholipid metabolism</keyword>
<keyword id="KW-1185">Reference proteome</keyword>
<dbReference type="EC" id="1.1.1.94" evidence="1"/>
<dbReference type="EMBL" id="CP000034">
    <property type="protein sequence ID" value="ABB63959.1"/>
    <property type="molecule type" value="Genomic_DNA"/>
</dbReference>
<dbReference type="RefSeq" id="WP_001076194.1">
    <property type="nucleotide sequence ID" value="NC_007606.1"/>
</dbReference>
<dbReference type="RefSeq" id="YP_405450.1">
    <property type="nucleotide sequence ID" value="NC_007606.1"/>
</dbReference>
<dbReference type="SMR" id="Q329P6"/>
<dbReference type="STRING" id="300267.SDY_4041"/>
<dbReference type="EnsemblBacteria" id="ABB63959">
    <property type="protein sequence ID" value="ABB63959"/>
    <property type="gene ID" value="SDY_4041"/>
</dbReference>
<dbReference type="GeneID" id="93778322"/>
<dbReference type="KEGG" id="sdy:SDY_4041"/>
<dbReference type="PATRIC" id="fig|300267.13.peg.4756"/>
<dbReference type="HOGENOM" id="CLU_033449_0_2_6"/>
<dbReference type="UniPathway" id="UPA00940"/>
<dbReference type="Proteomes" id="UP000002716">
    <property type="component" value="Chromosome"/>
</dbReference>
<dbReference type="GO" id="GO:0005829">
    <property type="term" value="C:cytosol"/>
    <property type="evidence" value="ECO:0007669"/>
    <property type="project" value="TreeGrafter"/>
</dbReference>
<dbReference type="GO" id="GO:0047952">
    <property type="term" value="F:glycerol-3-phosphate dehydrogenase [NAD(P)+] activity"/>
    <property type="evidence" value="ECO:0007669"/>
    <property type="project" value="UniProtKB-UniRule"/>
</dbReference>
<dbReference type="GO" id="GO:0051287">
    <property type="term" value="F:NAD binding"/>
    <property type="evidence" value="ECO:0007669"/>
    <property type="project" value="InterPro"/>
</dbReference>
<dbReference type="GO" id="GO:0005975">
    <property type="term" value="P:carbohydrate metabolic process"/>
    <property type="evidence" value="ECO:0007669"/>
    <property type="project" value="InterPro"/>
</dbReference>
<dbReference type="GO" id="GO:0046167">
    <property type="term" value="P:glycerol-3-phosphate biosynthetic process"/>
    <property type="evidence" value="ECO:0007669"/>
    <property type="project" value="UniProtKB-UniRule"/>
</dbReference>
<dbReference type="GO" id="GO:0046168">
    <property type="term" value="P:glycerol-3-phosphate catabolic process"/>
    <property type="evidence" value="ECO:0007669"/>
    <property type="project" value="InterPro"/>
</dbReference>
<dbReference type="GO" id="GO:0046474">
    <property type="term" value="P:glycerophospholipid biosynthetic process"/>
    <property type="evidence" value="ECO:0007669"/>
    <property type="project" value="TreeGrafter"/>
</dbReference>
<dbReference type="FunFam" id="1.10.1040.10:FF:000001">
    <property type="entry name" value="Glycerol-3-phosphate dehydrogenase [NAD(P)+]"/>
    <property type="match status" value="1"/>
</dbReference>
<dbReference type="FunFam" id="3.40.50.720:FF:000019">
    <property type="entry name" value="Glycerol-3-phosphate dehydrogenase [NAD(P)+]"/>
    <property type="match status" value="1"/>
</dbReference>
<dbReference type="Gene3D" id="1.10.1040.10">
    <property type="entry name" value="N-(1-d-carboxylethyl)-l-norvaline Dehydrogenase, domain 2"/>
    <property type="match status" value="1"/>
</dbReference>
<dbReference type="Gene3D" id="3.40.50.720">
    <property type="entry name" value="NAD(P)-binding Rossmann-like Domain"/>
    <property type="match status" value="1"/>
</dbReference>
<dbReference type="HAMAP" id="MF_00394">
    <property type="entry name" value="NAD_Glyc3P_dehydrog"/>
    <property type="match status" value="1"/>
</dbReference>
<dbReference type="InterPro" id="IPR008927">
    <property type="entry name" value="6-PGluconate_DH-like_C_sf"/>
</dbReference>
<dbReference type="InterPro" id="IPR013328">
    <property type="entry name" value="6PGD_dom2"/>
</dbReference>
<dbReference type="InterPro" id="IPR006168">
    <property type="entry name" value="G3P_DH_NAD-dep"/>
</dbReference>
<dbReference type="InterPro" id="IPR006109">
    <property type="entry name" value="G3P_DH_NAD-dep_C"/>
</dbReference>
<dbReference type="InterPro" id="IPR011128">
    <property type="entry name" value="G3P_DH_NAD-dep_N"/>
</dbReference>
<dbReference type="InterPro" id="IPR036291">
    <property type="entry name" value="NAD(P)-bd_dom_sf"/>
</dbReference>
<dbReference type="NCBIfam" id="NF000939">
    <property type="entry name" value="PRK00094.1-1"/>
    <property type="match status" value="1"/>
</dbReference>
<dbReference type="NCBIfam" id="NF000940">
    <property type="entry name" value="PRK00094.1-2"/>
    <property type="match status" value="1"/>
</dbReference>
<dbReference type="NCBIfam" id="NF000942">
    <property type="entry name" value="PRK00094.1-4"/>
    <property type="match status" value="1"/>
</dbReference>
<dbReference type="PANTHER" id="PTHR11728">
    <property type="entry name" value="GLYCEROL-3-PHOSPHATE DEHYDROGENASE"/>
    <property type="match status" value="1"/>
</dbReference>
<dbReference type="PANTHER" id="PTHR11728:SF1">
    <property type="entry name" value="GLYCEROL-3-PHOSPHATE DEHYDROGENASE [NAD(+)] 2, CHLOROPLASTIC"/>
    <property type="match status" value="1"/>
</dbReference>
<dbReference type="Pfam" id="PF07479">
    <property type="entry name" value="NAD_Gly3P_dh_C"/>
    <property type="match status" value="1"/>
</dbReference>
<dbReference type="Pfam" id="PF01210">
    <property type="entry name" value="NAD_Gly3P_dh_N"/>
    <property type="match status" value="1"/>
</dbReference>
<dbReference type="PIRSF" id="PIRSF000114">
    <property type="entry name" value="Glycerol-3-P_dh"/>
    <property type="match status" value="1"/>
</dbReference>
<dbReference type="PRINTS" id="PR00077">
    <property type="entry name" value="GPDHDRGNASE"/>
</dbReference>
<dbReference type="SUPFAM" id="SSF48179">
    <property type="entry name" value="6-phosphogluconate dehydrogenase C-terminal domain-like"/>
    <property type="match status" value="1"/>
</dbReference>
<dbReference type="SUPFAM" id="SSF51735">
    <property type="entry name" value="NAD(P)-binding Rossmann-fold domains"/>
    <property type="match status" value="1"/>
</dbReference>
<dbReference type="PROSITE" id="PS00957">
    <property type="entry name" value="NAD_G3PDH"/>
    <property type="match status" value="1"/>
</dbReference>
<evidence type="ECO:0000255" key="1">
    <source>
        <dbReference type="HAMAP-Rule" id="MF_00394"/>
    </source>
</evidence>
<comment type="function">
    <text evidence="1">Catalyzes the reduction of the glycolytic intermediate dihydroxyacetone phosphate (DHAP) to sn-glycerol 3-phosphate (G3P), the key precursor for phospholipid synthesis.</text>
</comment>
<comment type="catalytic activity">
    <reaction evidence="1">
        <text>sn-glycerol 3-phosphate + NAD(+) = dihydroxyacetone phosphate + NADH + H(+)</text>
        <dbReference type="Rhea" id="RHEA:11092"/>
        <dbReference type="ChEBI" id="CHEBI:15378"/>
        <dbReference type="ChEBI" id="CHEBI:57540"/>
        <dbReference type="ChEBI" id="CHEBI:57597"/>
        <dbReference type="ChEBI" id="CHEBI:57642"/>
        <dbReference type="ChEBI" id="CHEBI:57945"/>
        <dbReference type="EC" id="1.1.1.94"/>
    </reaction>
    <physiologicalReaction direction="right-to-left" evidence="1">
        <dbReference type="Rhea" id="RHEA:11094"/>
    </physiologicalReaction>
</comment>
<comment type="catalytic activity">
    <reaction evidence="1">
        <text>sn-glycerol 3-phosphate + NADP(+) = dihydroxyacetone phosphate + NADPH + H(+)</text>
        <dbReference type="Rhea" id="RHEA:11096"/>
        <dbReference type="ChEBI" id="CHEBI:15378"/>
        <dbReference type="ChEBI" id="CHEBI:57597"/>
        <dbReference type="ChEBI" id="CHEBI:57642"/>
        <dbReference type="ChEBI" id="CHEBI:57783"/>
        <dbReference type="ChEBI" id="CHEBI:58349"/>
        <dbReference type="EC" id="1.1.1.94"/>
    </reaction>
    <physiologicalReaction direction="right-to-left" evidence="1">
        <dbReference type="Rhea" id="RHEA:11098"/>
    </physiologicalReaction>
</comment>
<comment type="pathway">
    <text evidence="1">Membrane lipid metabolism; glycerophospholipid metabolism.</text>
</comment>
<comment type="subcellular location">
    <subcellularLocation>
        <location evidence="1">Cytoplasm</location>
    </subcellularLocation>
</comment>
<comment type="similarity">
    <text evidence="1">Belongs to the NAD-dependent glycerol-3-phosphate dehydrogenase family.</text>
</comment>
<organism>
    <name type="scientific">Shigella dysenteriae serotype 1 (strain Sd197)</name>
    <dbReference type="NCBI Taxonomy" id="300267"/>
    <lineage>
        <taxon>Bacteria</taxon>
        <taxon>Pseudomonadati</taxon>
        <taxon>Pseudomonadota</taxon>
        <taxon>Gammaproteobacteria</taxon>
        <taxon>Enterobacterales</taxon>
        <taxon>Enterobacteriaceae</taxon>
        <taxon>Shigella</taxon>
    </lineage>
</organism>
<protein>
    <recommendedName>
        <fullName evidence="1">Glycerol-3-phosphate dehydrogenase [NAD(P)+]</fullName>
        <ecNumber evidence="1">1.1.1.94</ecNumber>
    </recommendedName>
    <alternativeName>
        <fullName evidence="1">NAD(P)(+)-dependent glycerol-3-phosphate dehydrogenase</fullName>
    </alternativeName>
    <alternativeName>
        <fullName evidence="1">NAD(P)H-dependent dihydroxyacetone-phosphate reductase</fullName>
    </alternativeName>
</protein>
<feature type="chain" id="PRO_0000255369" description="Glycerol-3-phosphate dehydrogenase [NAD(P)+]">
    <location>
        <begin position="1"/>
        <end position="339"/>
    </location>
</feature>
<feature type="active site" description="Proton acceptor" evidence="1">
    <location>
        <position position="195"/>
    </location>
</feature>
<feature type="binding site" evidence="1">
    <location>
        <position position="15"/>
    </location>
    <ligand>
        <name>NADPH</name>
        <dbReference type="ChEBI" id="CHEBI:57783"/>
    </ligand>
</feature>
<feature type="binding site" evidence="1">
    <location>
        <position position="16"/>
    </location>
    <ligand>
        <name>NADPH</name>
        <dbReference type="ChEBI" id="CHEBI:57783"/>
    </ligand>
</feature>
<feature type="binding site" evidence="1">
    <location>
        <position position="36"/>
    </location>
    <ligand>
        <name>NADPH</name>
        <dbReference type="ChEBI" id="CHEBI:57783"/>
    </ligand>
</feature>
<feature type="binding site" evidence="1">
    <location>
        <position position="110"/>
    </location>
    <ligand>
        <name>NADPH</name>
        <dbReference type="ChEBI" id="CHEBI:57783"/>
    </ligand>
</feature>
<feature type="binding site" evidence="1">
    <location>
        <position position="110"/>
    </location>
    <ligand>
        <name>sn-glycerol 3-phosphate</name>
        <dbReference type="ChEBI" id="CHEBI:57597"/>
    </ligand>
</feature>
<feature type="binding site" evidence="1">
    <location>
        <position position="139"/>
    </location>
    <ligand>
        <name>sn-glycerol 3-phosphate</name>
        <dbReference type="ChEBI" id="CHEBI:57597"/>
    </ligand>
</feature>
<feature type="binding site" evidence="1">
    <location>
        <position position="141"/>
    </location>
    <ligand>
        <name>sn-glycerol 3-phosphate</name>
        <dbReference type="ChEBI" id="CHEBI:57597"/>
    </ligand>
</feature>
<feature type="binding site" evidence="1">
    <location>
        <position position="143"/>
    </location>
    <ligand>
        <name>NADPH</name>
        <dbReference type="ChEBI" id="CHEBI:57783"/>
    </ligand>
</feature>
<feature type="binding site" evidence="1">
    <location>
        <position position="195"/>
    </location>
    <ligand>
        <name>sn-glycerol 3-phosphate</name>
        <dbReference type="ChEBI" id="CHEBI:57597"/>
    </ligand>
</feature>
<feature type="binding site" evidence="1">
    <location>
        <position position="248"/>
    </location>
    <ligand>
        <name>sn-glycerol 3-phosphate</name>
        <dbReference type="ChEBI" id="CHEBI:57597"/>
    </ligand>
</feature>
<feature type="binding site" evidence="1">
    <location>
        <position position="258"/>
    </location>
    <ligand>
        <name>sn-glycerol 3-phosphate</name>
        <dbReference type="ChEBI" id="CHEBI:57597"/>
    </ligand>
</feature>
<feature type="binding site" evidence="1">
    <location>
        <position position="259"/>
    </location>
    <ligand>
        <name>NADPH</name>
        <dbReference type="ChEBI" id="CHEBI:57783"/>
    </ligand>
</feature>
<feature type="binding site" evidence="1">
    <location>
        <position position="259"/>
    </location>
    <ligand>
        <name>sn-glycerol 3-phosphate</name>
        <dbReference type="ChEBI" id="CHEBI:57597"/>
    </ligand>
</feature>
<feature type="binding site" evidence="1">
    <location>
        <position position="260"/>
    </location>
    <ligand>
        <name>sn-glycerol 3-phosphate</name>
        <dbReference type="ChEBI" id="CHEBI:57597"/>
    </ligand>
</feature>
<feature type="binding site" evidence="1">
    <location>
        <position position="283"/>
    </location>
    <ligand>
        <name>NADPH</name>
        <dbReference type="ChEBI" id="CHEBI:57783"/>
    </ligand>
</feature>
<feature type="binding site" evidence="1">
    <location>
        <position position="285"/>
    </location>
    <ligand>
        <name>NADPH</name>
        <dbReference type="ChEBI" id="CHEBI:57783"/>
    </ligand>
</feature>